<sequence>MNLIAAAIAIGLSALGAGIGNGLIVSRTVEGVARQPEARGQLMGIMFIGVGLVEALPIIGVVIAFMTFAG</sequence>
<organism>
    <name type="scientific">Staphylococcus aureus (strain MSSA476)</name>
    <dbReference type="NCBI Taxonomy" id="282459"/>
    <lineage>
        <taxon>Bacteria</taxon>
        <taxon>Bacillati</taxon>
        <taxon>Bacillota</taxon>
        <taxon>Bacilli</taxon>
        <taxon>Bacillales</taxon>
        <taxon>Staphylococcaceae</taxon>
        <taxon>Staphylococcus</taxon>
    </lineage>
</organism>
<accession>Q6G7K2</accession>
<proteinExistence type="inferred from homology"/>
<evidence type="ECO:0000255" key="1">
    <source>
        <dbReference type="HAMAP-Rule" id="MF_01396"/>
    </source>
</evidence>
<comment type="function">
    <text evidence="1">F(1)F(0) ATP synthase produces ATP from ADP in the presence of a proton or sodium gradient. F-type ATPases consist of two structural domains, F(1) containing the extramembraneous catalytic core and F(0) containing the membrane proton channel, linked together by a central stalk and a peripheral stalk. During catalysis, ATP synthesis in the catalytic domain of F(1) is coupled via a rotary mechanism of the central stalk subunits to proton translocation.</text>
</comment>
<comment type="function">
    <text evidence="1">Key component of the F(0) channel; it plays a direct role in translocation across the membrane. A homomeric c-ring of between 10-14 subunits forms the central stalk rotor element with the F(1) delta and epsilon subunits.</text>
</comment>
<comment type="subunit">
    <text evidence="1">F-type ATPases have 2 components, F(1) - the catalytic core - and F(0) - the membrane proton channel. F(1) has five subunits: alpha(3), beta(3), gamma(1), delta(1), epsilon(1). F(0) has three main subunits: a(1), b(2) and c(10-14). The alpha and beta chains form an alternating ring which encloses part of the gamma chain. F(1) is attached to F(0) by a central stalk formed by the gamma and epsilon chains, while a peripheral stalk is formed by the delta and b chains.</text>
</comment>
<comment type="subcellular location">
    <subcellularLocation>
        <location evidence="1">Cell membrane</location>
        <topology evidence="1">Multi-pass membrane protein</topology>
    </subcellularLocation>
</comment>
<comment type="similarity">
    <text evidence="1">Belongs to the ATPase C chain family.</text>
</comment>
<feature type="chain" id="PRO_1000184504" description="ATP synthase subunit c">
    <location>
        <begin position="1"/>
        <end position="70"/>
    </location>
</feature>
<feature type="transmembrane region" description="Helical" evidence="1">
    <location>
        <begin position="4"/>
        <end position="24"/>
    </location>
</feature>
<feature type="transmembrane region" description="Helical" evidence="1">
    <location>
        <begin position="45"/>
        <end position="65"/>
    </location>
</feature>
<feature type="site" description="Reversibly protonated during proton transport" evidence="1">
    <location>
        <position position="54"/>
    </location>
</feature>
<keyword id="KW-0066">ATP synthesis</keyword>
<keyword id="KW-1003">Cell membrane</keyword>
<keyword id="KW-0138">CF(0)</keyword>
<keyword id="KW-0375">Hydrogen ion transport</keyword>
<keyword id="KW-0406">Ion transport</keyword>
<keyword id="KW-0446">Lipid-binding</keyword>
<keyword id="KW-0472">Membrane</keyword>
<keyword id="KW-0812">Transmembrane</keyword>
<keyword id="KW-1133">Transmembrane helix</keyword>
<keyword id="KW-0813">Transport</keyword>
<name>ATPL_STAAS</name>
<protein>
    <recommendedName>
        <fullName evidence="1">ATP synthase subunit c</fullName>
    </recommendedName>
    <alternativeName>
        <fullName evidence="1">ATP synthase F(0) sector subunit c</fullName>
    </alternativeName>
    <alternativeName>
        <fullName evidence="1">F-type ATPase subunit c</fullName>
        <shortName evidence="1">F-ATPase subunit c</shortName>
    </alternativeName>
    <alternativeName>
        <fullName evidence="1">Lipid-binding protein</fullName>
    </alternativeName>
</protein>
<reference key="1">
    <citation type="journal article" date="2004" name="Proc. Natl. Acad. Sci. U.S.A.">
        <title>Complete genomes of two clinical Staphylococcus aureus strains: evidence for the rapid evolution of virulence and drug resistance.</title>
        <authorList>
            <person name="Holden M.T.G."/>
            <person name="Feil E.J."/>
            <person name="Lindsay J.A."/>
            <person name="Peacock S.J."/>
            <person name="Day N.P.J."/>
            <person name="Enright M.C."/>
            <person name="Foster T.J."/>
            <person name="Moore C.E."/>
            <person name="Hurst L."/>
            <person name="Atkin R."/>
            <person name="Barron A."/>
            <person name="Bason N."/>
            <person name="Bentley S.D."/>
            <person name="Chillingworth C."/>
            <person name="Chillingworth T."/>
            <person name="Churcher C."/>
            <person name="Clark L."/>
            <person name="Corton C."/>
            <person name="Cronin A."/>
            <person name="Doggett J."/>
            <person name="Dowd L."/>
            <person name="Feltwell T."/>
            <person name="Hance Z."/>
            <person name="Harris B."/>
            <person name="Hauser H."/>
            <person name="Holroyd S."/>
            <person name="Jagels K."/>
            <person name="James K.D."/>
            <person name="Lennard N."/>
            <person name="Line A."/>
            <person name="Mayes R."/>
            <person name="Moule S."/>
            <person name="Mungall K."/>
            <person name="Ormond D."/>
            <person name="Quail M.A."/>
            <person name="Rabbinowitsch E."/>
            <person name="Rutherford K.M."/>
            <person name="Sanders M."/>
            <person name="Sharp S."/>
            <person name="Simmonds M."/>
            <person name="Stevens K."/>
            <person name="Whitehead S."/>
            <person name="Barrell B.G."/>
            <person name="Spratt B.G."/>
            <person name="Parkhill J."/>
        </authorList>
    </citation>
    <scope>NUCLEOTIDE SEQUENCE [LARGE SCALE GENOMIC DNA]</scope>
    <source>
        <strain>MSSA476</strain>
    </source>
</reference>
<dbReference type="EMBL" id="BX571857">
    <property type="protein sequence ID" value="CAG43819.1"/>
    <property type="molecule type" value="Genomic_DNA"/>
</dbReference>
<dbReference type="RefSeq" id="WP_001048816.1">
    <property type="nucleotide sequence ID" value="NC_002953.3"/>
</dbReference>
<dbReference type="SMR" id="Q6G7K2"/>
<dbReference type="GeneID" id="98346415"/>
<dbReference type="KEGG" id="sas:SAS2011"/>
<dbReference type="HOGENOM" id="CLU_148047_1_1_9"/>
<dbReference type="GO" id="GO:0005886">
    <property type="term" value="C:plasma membrane"/>
    <property type="evidence" value="ECO:0007669"/>
    <property type="project" value="UniProtKB-SubCell"/>
</dbReference>
<dbReference type="GO" id="GO:0045259">
    <property type="term" value="C:proton-transporting ATP synthase complex"/>
    <property type="evidence" value="ECO:0007669"/>
    <property type="project" value="UniProtKB-KW"/>
</dbReference>
<dbReference type="GO" id="GO:0033177">
    <property type="term" value="C:proton-transporting two-sector ATPase complex, proton-transporting domain"/>
    <property type="evidence" value="ECO:0007669"/>
    <property type="project" value="InterPro"/>
</dbReference>
<dbReference type="GO" id="GO:0008289">
    <property type="term" value="F:lipid binding"/>
    <property type="evidence" value="ECO:0007669"/>
    <property type="project" value="UniProtKB-KW"/>
</dbReference>
<dbReference type="GO" id="GO:0046933">
    <property type="term" value="F:proton-transporting ATP synthase activity, rotational mechanism"/>
    <property type="evidence" value="ECO:0007669"/>
    <property type="project" value="UniProtKB-UniRule"/>
</dbReference>
<dbReference type="CDD" id="cd18185">
    <property type="entry name" value="ATP-synt_Fo_c_ATPE"/>
    <property type="match status" value="1"/>
</dbReference>
<dbReference type="FunFam" id="1.20.20.10:FF:000004">
    <property type="entry name" value="ATP synthase subunit c"/>
    <property type="match status" value="1"/>
</dbReference>
<dbReference type="Gene3D" id="1.20.20.10">
    <property type="entry name" value="F1F0 ATP synthase subunit C"/>
    <property type="match status" value="1"/>
</dbReference>
<dbReference type="HAMAP" id="MF_01396">
    <property type="entry name" value="ATP_synth_c_bact"/>
    <property type="match status" value="1"/>
</dbReference>
<dbReference type="InterPro" id="IPR005953">
    <property type="entry name" value="ATP_synth_csu_bac/chlpt"/>
</dbReference>
<dbReference type="InterPro" id="IPR000454">
    <property type="entry name" value="ATP_synth_F0_csu"/>
</dbReference>
<dbReference type="InterPro" id="IPR020537">
    <property type="entry name" value="ATP_synth_F0_csu_DDCD_BS"/>
</dbReference>
<dbReference type="InterPro" id="IPR038662">
    <property type="entry name" value="ATP_synth_F0_csu_sf"/>
</dbReference>
<dbReference type="InterPro" id="IPR002379">
    <property type="entry name" value="ATPase_proteolipid_c-like_dom"/>
</dbReference>
<dbReference type="InterPro" id="IPR035921">
    <property type="entry name" value="F/V-ATP_Csub_sf"/>
</dbReference>
<dbReference type="NCBIfam" id="TIGR01260">
    <property type="entry name" value="ATP_synt_c"/>
    <property type="match status" value="1"/>
</dbReference>
<dbReference type="NCBIfam" id="NF005363">
    <property type="entry name" value="PRK06876.1"/>
    <property type="match status" value="1"/>
</dbReference>
<dbReference type="Pfam" id="PF00137">
    <property type="entry name" value="ATP-synt_C"/>
    <property type="match status" value="1"/>
</dbReference>
<dbReference type="PRINTS" id="PR00124">
    <property type="entry name" value="ATPASEC"/>
</dbReference>
<dbReference type="SUPFAM" id="SSF81333">
    <property type="entry name" value="F1F0 ATP synthase subunit C"/>
    <property type="match status" value="1"/>
</dbReference>
<dbReference type="PROSITE" id="PS00605">
    <property type="entry name" value="ATPASE_C"/>
    <property type="match status" value="1"/>
</dbReference>
<gene>
    <name evidence="1" type="primary">atpE</name>
    <name type="ordered locus">SAS2011</name>
</gene>